<dbReference type="EMBL" id="FM242711">
    <property type="protein sequence ID" value="CAS06409.1"/>
    <property type="molecule type" value="Genomic_DNA"/>
</dbReference>
<dbReference type="RefSeq" id="WP_003724989.1">
    <property type="nucleotide sequence ID" value="NC_012488.1"/>
</dbReference>
<dbReference type="SMR" id="C1KZN6"/>
<dbReference type="KEGG" id="lmc:Lm4b_02655"/>
<dbReference type="HOGENOM" id="CLU_018614_3_0_9"/>
<dbReference type="GO" id="GO:0005886">
    <property type="term" value="C:plasma membrane"/>
    <property type="evidence" value="ECO:0007669"/>
    <property type="project" value="UniProtKB-SubCell"/>
</dbReference>
<dbReference type="GO" id="GO:0008556">
    <property type="term" value="F:P-type potassium transmembrane transporter activity"/>
    <property type="evidence" value="ECO:0007669"/>
    <property type="project" value="InterPro"/>
</dbReference>
<dbReference type="GO" id="GO:0030955">
    <property type="term" value="F:potassium ion binding"/>
    <property type="evidence" value="ECO:0007669"/>
    <property type="project" value="UniProtKB-UniRule"/>
</dbReference>
<dbReference type="HAMAP" id="MF_00275">
    <property type="entry name" value="KdpA"/>
    <property type="match status" value="1"/>
</dbReference>
<dbReference type="InterPro" id="IPR004623">
    <property type="entry name" value="KdpA"/>
</dbReference>
<dbReference type="NCBIfam" id="TIGR00680">
    <property type="entry name" value="kdpA"/>
    <property type="match status" value="1"/>
</dbReference>
<dbReference type="PANTHER" id="PTHR30607">
    <property type="entry name" value="POTASSIUM-TRANSPORTING ATPASE A CHAIN"/>
    <property type="match status" value="1"/>
</dbReference>
<dbReference type="PANTHER" id="PTHR30607:SF2">
    <property type="entry name" value="POTASSIUM-TRANSPORTING ATPASE POTASSIUM-BINDING SUBUNIT"/>
    <property type="match status" value="1"/>
</dbReference>
<dbReference type="Pfam" id="PF03814">
    <property type="entry name" value="KdpA"/>
    <property type="match status" value="1"/>
</dbReference>
<dbReference type="PIRSF" id="PIRSF001294">
    <property type="entry name" value="K_ATPaseA"/>
    <property type="match status" value="1"/>
</dbReference>
<proteinExistence type="inferred from homology"/>
<sequence>MKYIVMQDAFFVVLLLVLAVPLGIYMYKVMIGEKVFLSRVLEPVERFGYRLMGVSEVGMSAKRYAVSVLAFSAVGFVFVMAVLMLQGFLPLNPEGMKGLSFSLAFNTAASFVSNTNWQAYSGEAALSYFSQSIGLTVQNFVSAATGIAVLFAVIRGFIWKKQKTIGNFWQDLFRVTLYILLPLSLILALLLVSQGVVQSFADYSVVETLENGAKQLIPLGPAASQIAIKQLGTNGGGFFGANSAFPFENPSSFTNLIEMLAILLIPVALVVMFGRAVKDSKQGRAIMTAMMIVFVIGVVAITISEQFAGPHYQGVATSGSMEGKEVRFGVGGSSLFAASTTAASNGAVNAMHDSLTPLGGLVPMFFMQLGEVVFGGVGSGLYGMIGFIILTVFIAGLLVGRTPEYLGKKIEPYDMKMVCLLILVPPLLTLFGTAVAVMMPSVQASVSASGAHGFSEVLYAFTSMGNNNGSAFAGFAADTTFTNMVGAVMMLLARFIPLVAALYLAQNMAGKSSVAASSGTLSTKNGMFIGLLIGVVVLVGALSFLPALALGPIADFFTTFK</sequence>
<feature type="chain" id="PRO_1000204786" description="Potassium-transporting ATPase potassium-binding subunit">
    <location>
        <begin position="1"/>
        <end position="561"/>
    </location>
</feature>
<feature type="transmembrane region" description="Helical" evidence="1">
    <location>
        <begin position="4"/>
        <end position="24"/>
    </location>
</feature>
<feature type="transmembrane region" description="Helical" evidence="1">
    <location>
        <begin position="65"/>
        <end position="85"/>
    </location>
</feature>
<feature type="transmembrane region" description="Helical" evidence="1">
    <location>
        <begin position="133"/>
        <end position="153"/>
    </location>
</feature>
<feature type="transmembrane region" description="Helical" evidence="1">
    <location>
        <begin position="177"/>
        <end position="197"/>
    </location>
</feature>
<feature type="transmembrane region" description="Helical" evidence="1">
    <location>
        <begin position="253"/>
        <end position="273"/>
    </location>
</feature>
<feature type="transmembrane region" description="Helical" evidence="1">
    <location>
        <begin position="285"/>
        <end position="305"/>
    </location>
</feature>
<feature type="transmembrane region" description="Helical" evidence="1">
    <location>
        <begin position="380"/>
        <end position="400"/>
    </location>
</feature>
<feature type="transmembrane region" description="Helical" evidence="1">
    <location>
        <begin position="417"/>
        <end position="437"/>
    </location>
</feature>
<feature type="transmembrane region" description="Helical" evidence="1">
    <location>
        <begin position="484"/>
        <end position="504"/>
    </location>
</feature>
<feature type="transmembrane region" description="Helical" evidence="1">
    <location>
        <begin position="528"/>
        <end position="548"/>
    </location>
</feature>
<evidence type="ECO:0000255" key="1">
    <source>
        <dbReference type="HAMAP-Rule" id="MF_00275"/>
    </source>
</evidence>
<reference key="1">
    <citation type="journal article" date="2012" name="BMC Genomics">
        <title>Comparative genomics and transcriptomics of lineages I, II, and III strains of Listeria monocytogenes.</title>
        <authorList>
            <person name="Hain T."/>
            <person name="Ghai R."/>
            <person name="Billion A."/>
            <person name="Kuenne C.T."/>
            <person name="Steinweg C."/>
            <person name="Izar B."/>
            <person name="Mohamed W."/>
            <person name="Mraheil M."/>
            <person name="Domann E."/>
            <person name="Schaffrath S."/>
            <person name="Karst U."/>
            <person name="Goesmann A."/>
            <person name="Oehm S."/>
            <person name="Puhler A."/>
            <person name="Merkl R."/>
            <person name="Vorwerk S."/>
            <person name="Glaser P."/>
            <person name="Garrido P."/>
            <person name="Rusniok C."/>
            <person name="Buchrieser C."/>
            <person name="Goebel W."/>
            <person name="Chakraborty T."/>
        </authorList>
    </citation>
    <scope>NUCLEOTIDE SEQUENCE [LARGE SCALE GENOMIC DNA]</scope>
    <source>
        <strain>CLIP80459</strain>
    </source>
</reference>
<organism>
    <name type="scientific">Listeria monocytogenes serotype 4b (strain CLIP80459)</name>
    <dbReference type="NCBI Taxonomy" id="568819"/>
    <lineage>
        <taxon>Bacteria</taxon>
        <taxon>Bacillati</taxon>
        <taxon>Bacillota</taxon>
        <taxon>Bacilli</taxon>
        <taxon>Bacillales</taxon>
        <taxon>Listeriaceae</taxon>
        <taxon>Listeria</taxon>
    </lineage>
</organism>
<accession>C1KZN6</accession>
<name>KDPA_LISMC</name>
<comment type="function">
    <text evidence="1">Part of the high-affinity ATP-driven potassium transport (or Kdp) system, which catalyzes the hydrolysis of ATP coupled with the electrogenic transport of potassium into the cytoplasm. This subunit binds the extracellular potassium ions and delivers the ions to the membrane domain of KdpB through an intramembrane tunnel.</text>
</comment>
<comment type="subunit">
    <text evidence="1">The system is composed of three essential subunits: KdpA, KdpB and KdpC.</text>
</comment>
<comment type="subcellular location">
    <subcellularLocation>
        <location evidence="1">Cell membrane</location>
        <topology evidence="1">Multi-pass membrane protein</topology>
    </subcellularLocation>
</comment>
<comment type="similarity">
    <text evidence="1">Belongs to the KdpA family.</text>
</comment>
<keyword id="KW-1003">Cell membrane</keyword>
<keyword id="KW-0406">Ion transport</keyword>
<keyword id="KW-0472">Membrane</keyword>
<keyword id="KW-0630">Potassium</keyword>
<keyword id="KW-0633">Potassium transport</keyword>
<keyword id="KW-0812">Transmembrane</keyword>
<keyword id="KW-1133">Transmembrane helix</keyword>
<keyword id="KW-0813">Transport</keyword>
<protein>
    <recommendedName>
        <fullName evidence="1">Potassium-transporting ATPase potassium-binding subunit</fullName>
    </recommendedName>
    <alternativeName>
        <fullName evidence="1">ATP phosphohydrolase [potassium-transporting] A chain</fullName>
    </alternativeName>
    <alternativeName>
        <fullName evidence="1">Potassium-binding and translocating subunit A</fullName>
    </alternativeName>
    <alternativeName>
        <fullName evidence="1">Potassium-translocating ATPase A chain</fullName>
    </alternativeName>
</protein>
<gene>
    <name evidence="1" type="primary">kdpA</name>
    <name type="ordered locus">Lm4b_02655</name>
</gene>